<keyword id="KW-0002">3D-structure</keyword>
<keyword id="KW-0007">Acetylation</keyword>
<keyword id="KW-0010">Activator</keyword>
<keyword id="KW-0963">Cytoplasm</keyword>
<keyword id="KW-0217">Developmental protein</keyword>
<keyword id="KW-0238">DNA-binding</keyword>
<keyword id="KW-0391">Immunity</keyword>
<keyword id="KW-0399">Innate immunity</keyword>
<keyword id="KW-0539">Nucleus</keyword>
<keyword id="KW-1185">Reference proteome</keyword>
<keyword id="KW-0677">Repeat</keyword>
<keyword id="KW-0678">Repressor</keyword>
<keyword id="KW-0804">Transcription</keyword>
<keyword id="KW-0805">Transcription regulation</keyword>
<evidence type="ECO:0000255" key="1"/>
<evidence type="ECO:0000255" key="2">
    <source>
        <dbReference type="PROSITE-ProRule" id="PRU00061"/>
    </source>
</evidence>
<evidence type="ECO:0000255" key="3">
    <source>
        <dbReference type="PROSITE-ProRule" id="PRU00106"/>
    </source>
</evidence>
<evidence type="ECO:0000256" key="4">
    <source>
        <dbReference type="SAM" id="MobiDB-lite"/>
    </source>
</evidence>
<evidence type="ECO:0000269" key="5">
    <source>
    </source>
</evidence>
<evidence type="ECO:0000269" key="6">
    <source>
    </source>
</evidence>
<evidence type="ECO:0000269" key="7">
    <source>
    </source>
</evidence>
<evidence type="ECO:0000269" key="8">
    <source>
    </source>
</evidence>
<evidence type="ECO:0000269" key="9">
    <source>
    </source>
</evidence>
<evidence type="ECO:0000269" key="10">
    <source>
    </source>
</evidence>
<evidence type="ECO:0000269" key="11">
    <source>
    </source>
</evidence>
<evidence type="ECO:0000269" key="12">
    <source>
    </source>
</evidence>
<evidence type="ECO:0000269" key="13">
    <source>
    </source>
</evidence>
<evidence type="ECO:0000269" key="14">
    <source>
    </source>
</evidence>
<evidence type="ECO:0000269" key="15">
    <source>
    </source>
</evidence>
<evidence type="ECO:0000305" key="16"/>
<evidence type="ECO:0007744" key="17">
    <source>
        <dbReference type="PDB" id="5YZP"/>
    </source>
</evidence>
<evidence type="ECO:0007744" key="18">
    <source>
        <dbReference type="PDB" id="5YZW"/>
    </source>
</evidence>
<evidence type="ECO:0007744" key="19">
    <source>
        <dbReference type="PDB" id="5Z7D"/>
    </source>
</evidence>
<evidence type="ECO:0007829" key="20">
    <source>
        <dbReference type="PDB" id="5YZP"/>
    </source>
</evidence>
<evidence type="ECO:0007829" key="21">
    <source>
        <dbReference type="PDB" id="5YZW"/>
    </source>
</evidence>
<evidence type="ECO:0007829" key="22">
    <source>
        <dbReference type="PDB" id="6OE9"/>
    </source>
</evidence>
<organism>
    <name type="scientific">Mus musculus</name>
    <name type="common">Mouse</name>
    <dbReference type="NCBI Taxonomy" id="10090"/>
    <lineage>
        <taxon>Eukaryota</taxon>
        <taxon>Metazoa</taxon>
        <taxon>Chordata</taxon>
        <taxon>Craniata</taxon>
        <taxon>Vertebrata</taxon>
        <taxon>Euteleostomi</taxon>
        <taxon>Mammalia</taxon>
        <taxon>Eutheria</taxon>
        <taxon>Euarchontoglires</taxon>
        <taxon>Glires</taxon>
        <taxon>Rodentia</taxon>
        <taxon>Myomorpha</taxon>
        <taxon>Muroidea</taxon>
        <taxon>Muridae</taxon>
        <taxon>Murinae</taxon>
        <taxon>Mus</taxon>
        <taxon>Mus</taxon>
    </lineage>
</organism>
<name>IFI4_MOUSE</name>
<proteinExistence type="evidence at protein level"/>
<comment type="function">
    <text evidence="5 6 7 8 9 10 11 12 13 14 15">Interferon-stimulated protein that plays a role in several biological processes including cell differentiation, autophagy and innate immunity (PubMed:16244109, PubMed:25710914, PubMed:30936875). Cooperates with CGAS to sense dsDNA and activates the STING-dependent type I IFN pathway (PubMed:25710914, PubMed:33619523). Mechanistically, gets acetylated upon bacterial infection and then translocates from nucleus into cytoplasm to recruit STING for activation of TBK1-dependent IRF3 nuclear translocation and IFN-beta release (PubMed:28529930). Inhibits the transcription of ribosomal RNA. May inhibit DNA binding by UBTF. Inhibits cell growth via p53/TP53 and RB1-dependent and independent pathways. Acts as a coactivator of RUNX2 during osteogenesis. May be involved in macrophage differentiation. Enables skeletal muscle and cardiac myocyte differentiation by sequestring Id proteins in the cytosol and promoting their ubiquitination and subsequent degradation.</text>
</comment>
<comment type="subunit">
    <text evidence="6 7 13">Interacts with UBTF. Interacts with RUNX2. Interacts with ID1, ID2 and ID3. Interacts with STING (PubMed:28529930).</text>
</comment>
<comment type="subcellular location">
    <subcellularLocation>
        <location evidence="13">Nucleus</location>
    </subcellularLocation>
    <subcellularLocation>
        <location>Nucleus</location>
        <location>Nucleolus</location>
    </subcellularLocation>
    <subcellularLocation>
        <location evidence="13">Cytoplasm</location>
    </subcellularLocation>
    <text evidence="13">Nuclear in proliferating cells, translocates to cytosol during cell differentiation or bacterial infection.</text>
</comment>
<comment type="tissue specificity">
    <text evidence="7">Present in osteoblasts (at protein level).</text>
</comment>
<comment type="induction">
    <text evidence="8 13 14">By beta interferon. By macrophage differentiation factors. During myocyte differentiation. By different bacterial infections such as Staphylococcus aureus or Mycobacterium bovis.</text>
</comment>
<comment type="domain">
    <text>The 2 HIN-200 domains are able to interact with RUNX2.</text>
</comment>
<comment type="PTM">
    <text evidence="13">Acetylated upon bacterial infection, leading to translocation from nucleus to cytoplasm and subsequent recruitment of STING to activate IFN-beta production.</text>
</comment>
<comment type="disruption phenotype">
    <text evidence="14">Deletion mutant mice display increased susceptibility to Staphylococcus aureus pulmonary infection.</text>
</comment>
<comment type="similarity">
    <text evidence="16">Belongs to the HIN-200 family.</text>
</comment>
<protein>
    <recommendedName>
        <fullName>Interferon-activable protein 204</fullName>
        <shortName>Ifi-204</shortName>
    </recommendedName>
    <alternativeName>
        <fullName>Interferon-inducible protein p204</fullName>
    </alternativeName>
</protein>
<sequence length="619" mass="69438">MVNEYKRIVLLRGLECINKHYFSLFKSLLARDLNLERDNQEQYTTIQIANMMEEKFPADSGLGKLIAFCEEVPALRKRAEILKKERSEVTGETSLEKNGQEAGPATPTSTTSHMLASERGETSATQEETSTAQAGTSTAQARTSTAQAGTSTAQKRKIMREEETGVKKSKAAKEPDQPPCCEEPTARCQSPILHSSSSASSNIPSAKNQKSQPQNQNIPRGAVLHSEPLTVMVLTATDPFEYESPEHEVKNMLHATVATVSQYFHVKVFNINLKEKFTKKNFIIISNYFESKGILEINETSSVLEAAPDQMIEVPNSIIRNANASPKICDIQKGTSGAVFYGVFTLHKKTVNRKNTIYEIKDGSGSIEVVGSGKWHNINCKEGDKLHLFCFHLKTIDRQPKLVCGEHSFIKISKRGNVPKEPAKEEDHHHGPKQVMVLKVTEPFTYDLKEDKRMFHATVATETEFFRVKVFDTALKSKFIPRNIIAISDYFGCNGFLEIYRASCVSDVNVNPTMVISNTLRQRANATPKISYLFSQARGTFVSGEYLVNKKTERNKFIYYGIGDDTGKMEVVVYGRLTNVRCEPGSKLRLVCFELTSTEDGWQLRSVRHSYMQVINARK</sequence>
<accession>P0DOV2</accession>
<accession>B7ZNS3</accession>
<accession>P15092</accession>
<accession>Q08619</accession>
<accession>Q3TM07</accession>
<accession>Q3U776</accession>
<accession>Q3U7F4</accession>
<accession>Q3U7K5</accession>
<accession>Q3UCH9</accession>
<accession>Q8C4X3</accession>
<accession>Q921V9</accession>
<gene>
    <name type="primary">Ifi204</name>
</gene>
<reference key="1">
    <citation type="journal article" date="1989" name="J. Biol. Chem.">
        <title>Interferons as gene activators. Indications for repeated gene duplication during the evolution of a cluster of interferon-activatable genes on murine chromosome 1.</title>
        <authorList>
            <person name="Choubey D."/>
            <person name="Snoddy J."/>
            <person name="Chaturvedi V."/>
            <person name="Toniato E."/>
            <person name="Opdenakker G."/>
            <person name="Thakur A."/>
            <person name="Samanta H."/>
            <person name="Engel D.A."/>
            <person name="Lengyel P."/>
        </authorList>
    </citation>
    <scope>NUCLEOTIDE SEQUENCE [MRNA]</scope>
</reference>
<reference key="2">
    <citation type="submission" date="2005-07" db="EMBL/GenBank/DDBJ databases">
        <title>Cloning of mouse full open reading frames in Gateway(R) system entry vector (pDONR201).</title>
        <authorList>
            <person name="Ebert L."/>
            <person name="Muenstermann E."/>
            <person name="Schatten R."/>
            <person name="Henze S."/>
            <person name="Bohn E."/>
            <person name="Mollenhauer J."/>
            <person name="Wiemann S."/>
            <person name="Schick M."/>
            <person name="Korn B."/>
        </authorList>
    </citation>
    <scope>NUCLEOTIDE SEQUENCE [LARGE SCALE MRNA]</scope>
</reference>
<reference key="3">
    <citation type="journal article" date="2004" name="Genome Res.">
        <title>The status, quality, and expansion of the NIH full-length cDNA project: the Mammalian Gene Collection (MGC).</title>
        <authorList>
            <consortium name="The MGC Project Team"/>
        </authorList>
    </citation>
    <scope>NUCLEOTIDE SEQUENCE [LARGE SCALE MRNA]</scope>
    <source>
        <strain>Czech II</strain>
        <tissue>Mammary tumor</tissue>
    </source>
</reference>
<reference key="4">
    <citation type="journal article" date="2005" name="Science">
        <title>The transcriptional landscape of the mammalian genome.</title>
        <authorList>
            <person name="Carninci P."/>
            <person name="Kasukawa T."/>
            <person name="Katayama S."/>
            <person name="Gough J."/>
            <person name="Frith M.C."/>
            <person name="Maeda N."/>
            <person name="Oyama R."/>
            <person name="Ravasi T."/>
            <person name="Lenhard B."/>
            <person name="Wells C."/>
            <person name="Kodzius R."/>
            <person name="Shimokawa K."/>
            <person name="Bajic V.B."/>
            <person name="Brenner S.E."/>
            <person name="Batalov S."/>
            <person name="Forrest A.R."/>
            <person name="Zavolan M."/>
            <person name="Davis M.J."/>
            <person name="Wilming L.G."/>
            <person name="Aidinis V."/>
            <person name="Allen J.E."/>
            <person name="Ambesi-Impiombato A."/>
            <person name="Apweiler R."/>
            <person name="Aturaliya R.N."/>
            <person name="Bailey T.L."/>
            <person name="Bansal M."/>
            <person name="Baxter L."/>
            <person name="Beisel K.W."/>
            <person name="Bersano T."/>
            <person name="Bono H."/>
            <person name="Chalk A.M."/>
            <person name="Chiu K.P."/>
            <person name="Choudhary V."/>
            <person name="Christoffels A."/>
            <person name="Clutterbuck D.R."/>
            <person name="Crowe M.L."/>
            <person name="Dalla E."/>
            <person name="Dalrymple B.P."/>
            <person name="de Bono B."/>
            <person name="Della Gatta G."/>
            <person name="di Bernardo D."/>
            <person name="Down T."/>
            <person name="Engstrom P."/>
            <person name="Fagiolini M."/>
            <person name="Faulkner G."/>
            <person name="Fletcher C.F."/>
            <person name="Fukushima T."/>
            <person name="Furuno M."/>
            <person name="Futaki S."/>
            <person name="Gariboldi M."/>
            <person name="Georgii-Hemming P."/>
            <person name="Gingeras T.R."/>
            <person name="Gojobori T."/>
            <person name="Green R.E."/>
            <person name="Gustincich S."/>
            <person name="Harbers M."/>
            <person name="Hayashi Y."/>
            <person name="Hensch T.K."/>
            <person name="Hirokawa N."/>
            <person name="Hill D."/>
            <person name="Huminiecki L."/>
            <person name="Iacono M."/>
            <person name="Ikeo K."/>
            <person name="Iwama A."/>
            <person name="Ishikawa T."/>
            <person name="Jakt M."/>
            <person name="Kanapin A."/>
            <person name="Katoh M."/>
            <person name="Kawasawa Y."/>
            <person name="Kelso J."/>
            <person name="Kitamura H."/>
            <person name="Kitano H."/>
            <person name="Kollias G."/>
            <person name="Krishnan S.P."/>
            <person name="Kruger A."/>
            <person name="Kummerfeld S.K."/>
            <person name="Kurochkin I.V."/>
            <person name="Lareau L.F."/>
            <person name="Lazarevic D."/>
            <person name="Lipovich L."/>
            <person name="Liu J."/>
            <person name="Liuni S."/>
            <person name="McWilliam S."/>
            <person name="Madan Babu M."/>
            <person name="Madera M."/>
            <person name="Marchionni L."/>
            <person name="Matsuda H."/>
            <person name="Matsuzawa S."/>
            <person name="Miki H."/>
            <person name="Mignone F."/>
            <person name="Miyake S."/>
            <person name="Morris K."/>
            <person name="Mottagui-Tabar S."/>
            <person name="Mulder N."/>
            <person name="Nakano N."/>
            <person name="Nakauchi H."/>
            <person name="Ng P."/>
            <person name="Nilsson R."/>
            <person name="Nishiguchi S."/>
            <person name="Nishikawa S."/>
            <person name="Nori F."/>
            <person name="Ohara O."/>
            <person name="Okazaki Y."/>
            <person name="Orlando V."/>
            <person name="Pang K.C."/>
            <person name="Pavan W.J."/>
            <person name="Pavesi G."/>
            <person name="Pesole G."/>
            <person name="Petrovsky N."/>
            <person name="Piazza S."/>
            <person name="Reed J."/>
            <person name="Reid J.F."/>
            <person name="Ring B.Z."/>
            <person name="Ringwald M."/>
            <person name="Rost B."/>
            <person name="Ruan Y."/>
            <person name="Salzberg S.L."/>
            <person name="Sandelin A."/>
            <person name="Schneider C."/>
            <person name="Schoenbach C."/>
            <person name="Sekiguchi K."/>
            <person name="Semple C.A."/>
            <person name="Seno S."/>
            <person name="Sessa L."/>
            <person name="Sheng Y."/>
            <person name="Shibata Y."/>
            <person name="Shimada H."/>
            <person name="Shimada K."/>
            <person name="Silva D."/>
            <person name="Sinclair B."/>
            <person name="Sperling S."/>
            <person name="Stupka E."/>
            <person name="Sugiura K."/>
            <person name="Sultana R."/>
            <person name="Takenaka Y."/>
            <person name="Taki K."/>
            <person name="Tammoja K."/>
            <person name="Tan S.L."/>
            <person name="Tang S."/>
            <person name="Taylor M.S."/>
            <person name="Tegner J."/>
            <person name="Teichmann S.A."/>
            <person name="Ueda H.R."/>
            <person name="van Nimwegen E."/>
            <person name="Verardo R."/>
            <person name="Wei C.L."/>
            <person name="Yagi K."/>
            <person name="Yamanishi H."/>
            <person name="Zabarovsky E."/>
            <person name="Zhu S."/>
            <person name="Zimmer A."/>
            <person name="Hide W."/>
            <person name="Bult C."/>
            <person name="Grimmond S.M."/>
            <person name="Teasdale R.D."/>
            <person name="Liu E.T."/>
            <person name="Brusic V."/>
            <person name="Quackenbush J."/>
            <person name="Wahlestedt C."/>
            <person name="Mattick J.S."/>
            <person name="Hume D.A."/>
            <person name="Kai C."/>
            <person name="Sasaki D."/>
            <person name="Tomaru Y."/>
            <person name="Fukuda S."/>
            <person name="Kanamori-Katayama M."/>
            <person name="Suzuki M."/>
            <person name="Aoki J."/>
            <person name="Arakawa T."/>
            <person name="Iida J."/>
            <person name="Imamura K."/>
            <person name="Itoh M."/>
            <person name="Kato T."/>
            <person name="Kawaji H."/>
            <person name="Kawagashira N."/>
            <person name="Kawashima T."/>
            <person name="Kojima M."/>
            <person name="Kondo S."/>
            <person name="Konno H."/>
            <person name="Nakano K."/>
            <person name="Ninomiya N."/>
            <person name="Nishio T."/>
            <person name="Okada M."/>
            <person name="Plessy C."/>
            <person name="Shibata K."/>
            <person name="Shiraki T."/>
            <person name="Suzuki S."/>
            <person name="Tagami M."/>
            <person name="Waki K."/>
            <person name="Watahiki A."/>
            <person name="Okamura-Oho Y."/>
            <person name="Suzuki H."/>
            <person name="Kawai J."/>
            <person name="Hayashizaki Y."/>
        </authorList>
    </citation>
    <scope>NUCLEOTIDE SEQUENCE [LARGE SCALE MRNA] OF 1-208</scope>
    <source>
        <strain>C57BL/6J</strain>
        <tissue>Bone marrow macrophage</tissue>
    </source>
</reference>
<reference key="5">
    <citation type="journal article" date="1999" name="EMBO J.">
        <title>The interferon-inducible nucleolar p204 protein binds the ribosomal RNA-specific UBF1 transcription factor and inhibits ribosomal RNA transcription.</title>
        <authorList>
            <person name="Liu C.J."/>
            <person name="Wang H."/>
            <person name="Lengyel P."/>
        </authorList>
    </citation>
    <scope>FUNCTION</scope>
</reference>
<reference key="6">
    <citation type="journal article" date="2002" name="Mol. Cell. Biol.">
        <title>The MyoD-inducible p204 protein overcomes the inhibition of myoblast differentiation by Id proteins.</title>
        <authorList>
            <person name="Liu C.-J."/>
            <person name="Ding B."/>
            <person name="Wang H."/>
            <person name="Lengyel P."/>
        </authorList>
    </citation>
    <scope>FUNCTION</scope>
    <scope>INTERACTION WITH ID1; ID2 AND ID3</scope>
</reference>
<reference key="7">
    <citation type="journal article" date="2005" name="J. Biol. Chem.">
        <title>The interferon-inducible p204 protein acts as a transcriptional coactivator of Cbfa1 and enhances osteoblast differentiation.</title>
        <authorList>
            <person name="Liu C.-J."/>
            <person name="Chang E."/>
            <person name="Yu J."/>
            <person name="Carlson C.S."/>
            <person name="Prazak L."/>
            <person name="Yu X.-P."/>
            <person name="Ding B."/>
            <person name="Lengyel P."/>
            <person name="Di Cesare P.E."/>
        </authorList>
    </citation>
    <scope>FUNCTION</scope>
    <scope>TISSUE SPECIFICITY</scope>
    <scope>SUBCELLULAR LOCATION</scope>
    <scope>INTERACTION WITH RUNX2</scope>
</reference>
<reference key="8">
    <citation type="journal article" date="2006" name="FEBS Lett.">
        <title>p205, a potential tumor suppressor, inhibits cell proliferation via multiple pathways of cell cycle regulation.</title>
        <authorList>
            <person name="Asefa B."/>
            <person name="Dermott J.M."/>
            <person name="Kaldis P."/>
            <person name="Stefanisko K."/>
            <person name="Garfinkel D.J."/>
            <person name="Keller J.R."/>
        </authorList>
    </citation>
    <scope>FUNCTION</scope>
</reference>
<reference key="9">
    <citation type="journal article" date="2006" name="J. Biol. Chem.">
        <title>p204 is required for the differentiation of P19 murine embryonal carcinoma cells to beating cardiac myocytes: its expression is activated by the cardiac Gata4, Nkx2.5, and Tbx5 proteins.</title>
        <authorList>
            <person name="Ding B."/>
            <person name="Liu C.-J."/>
            <person name="Huang Y."/>
            <person name="Hickey R.P."/>
            <person name="Yu J."/>
            <person name="Kong W."/>
            <person name="Lengyel P."/>
        </authorList>
    </citation>
    <scope>FUNCTION</scope>
    <scope>SUBCELLULAR LOCATION</scope>
</reference>
<reference key="10">
    <citation type="journal article" date="2006" name="J. Biol. Chem.">
        <title>p204 protein overcomes the inhibition of the differentiation of P19 murine embryonal carcinoma cells to beating cardiac myocytes by Id proteins.</title>
        <authorList>
            <person name="Ding B."/>
            <person name="Liu C.-J."/>
            <person name="Huang Y."/>
            <person name="Yu J."/>
            <person name="Kong W."/>
            <person name="Lengyel P."/>
        </authorList>
    </citation>
    <scope>FUNCTION</scope>
</reference>
<reference key="11">
    <citation type="journal article" date="2006" name="J. Leukoc. Biol.">
        <title>The interferon-inducible gene, Ifi204, is transcriptionally activated in response to M-CSF, and its expression favors macrophage differentiation in myeloid progenitor cells.</title>
        <authorList>
            <person name="Dauffy J."/>
            <person name="Mouchiroud G."/>
            <person name="Bourette R.P."/>
        </authorList>
    </citation>
    <scope>INDUCTION</scope>
    <scope>FUNCTION</scope>
</reference>
<reference key="12">
    <citation type="journal article" date="2015" name="J. Immunol.">
        <title>cGAS and Ifi204 cooperate to produce type I IFNs in response to Francisella infection.</title>
        <authorList>
            <person name="Storek K.M."/>
            <person name="Gertsvolf N.A."/>
            <person name="Ohlson M.B."/>
            <person name="Monack D.M."/>
        </authorList>
    </citation>
    <scope>FUNCTION</scope>
</reference>
<reference key="13">
    <citation type="journal article" date="2017" name="Front. Cell. Infect. Microbiol.">
        <title>The Central Role of IFI204 in IFN-beta Release and Autophagy Activation during Mycobacterium bovis Infection.</title>
        <authorList>
            <person name="Chunfa L."/>
            <person name="Xin S."/>
            <person name="Qiang L."/>
            <person name="Sreevatsan S."/>
            <person name="Yang L."/>
            <person name="Zhao D."/>
            <person name="Zhou X."/>
        </authorList>
    </citation>
    <scope>FUNCTION</scope>
    <scope>ACETYLATION</scope>
    <scope>SUBCELLULAR LOCATION</scope>
    <scope>INTERACTION WITH STING</scope>
    <scope>INDUCTION BY MYCOBACTERIUM BOVIS</scope>
</reference>
<reference key="14">
    <citation type="journal article" date="2019" name="Front. Immunol.">
        <title>DNA Sensor IFI204 Contributes to Host Defense Against Staphylococcus aureus Infection in Mice.</title>
        <authorList>
            <person name="Chen W."/>
            <person name="Yu S.X."/>
            <person name="Zhou F.H."/>
            <person name="Zhang X.J."/>
            <person name="Gao W.Y."/>
            <person name="Li K.Y."/>
            <person name="Liu Z.Z."/>
            <person name="Han W.Y."/>
            <person name="Yang Y.J."/>
        </authorList>
    </citation>
    <scope>FUNCTION</scope>
    <scope>DISRUPTION PHENOTYPE</scope>
    <scope>INDUCTION BY STAPHYLOCOCCUS AUREUS</scope>
</reference>
<reference evidence="17 18 19" key="15">
    <citation type="journal article" date="2021" name="Nucleic Acids Res.">
        <title>Structural mechanism of DNA recognition by the p204 HIN domain.</title>
        <authorList>
            <person name="Fan X."/>
            <person name="Jiang J."/>
            <person name="Zhao D."/>
            <person name="Chen F."/>
            <person name="Ma H."/>
            <person name="Smith P."/>
            <person name="Unterholzner L."/>
            <person name="Xiao T.S."/>
            <person name="Jin T."/>
        </authorList>
    </citation>
    <scope>X-RAY CRYSTALLOGRAPHY (1.58 ANGSTROMS) OF 216-417</scope>
    <scope>DNA-BINDING</scope>
    <scope>FUNCTION</scope>
</reference>
<dbReference type="EMBL" id="M31419">
    <property type="protein sequence ID" value="AAA39313.1"/>
    <property type="molecule type" value="mRNA"/>
</dbReference>
<dbReference type="EMBL" id="AK150522">
    <property type="protein sequence ID" value="BAE29634.1"/>
    <property type="molecule type" value="mRNA"/>
</dbReference>
<dbReference type="EMBL" id="CT010351">
    <property type="protein sequence ID" value="CAJ18559.1"/>
    <property type="molecule type" value="mRNA"/>
</dbReference>
<dbReference type="EMBL" id="BC010546">
    <property type="protein sequence ID" value="AAH10546.1"/>
    <property type="molecule type" value="mRNA"/>
</dbReference>
<dbReference type="CCDS" id="CCDS35792.1"/>
<dbReference type="PIR" id="B34457">
    <property type="entry name" value="B34457"/>
</dbReference>
<dbReference type="RefSeq" id="NP_032355.2">
    <property type="nucleotide sequence ID" value="NM_008329.2"/>
</dbReference>
<dbReference type="PDB" id="5YZP">
    <property type="method" value="X-ray"/>
    <property type="resolution" value="1.58 A"/>
    <property type="chains" value="A=216-417"/>
</dbReference>
<dbReference type="PDB" id="5YZW">
    <property type="method" value="X-ray"/>
    <property type="resolution" value="2.00 A"/>
    <property type="chains" value="A/B=427-619"/>
</dbReference>
<dbReference type="PDB" id="5Z7D">
    <property type="method" value="X-ray"/>
    <property type="resolution" value="4.50 A"/>
    <property type="chains" value="A/B/C=216-619"/>
</dbReference>
<dbReference type="PDB" id="6OE9">
    <property type="method" value="X-ray"/>
    <property type="resolution" value="1.94 A"/>
    <property type="chains" value="A=211-415"/>
</dbReference>
<dbReference type="PDBsum" id="5YZP"/>
<dbReference type="PDBsum" id="5YZW"/>
<dbReference type="PDBsum" id="5Z7D"/>
<dbReference type="PDBsum" id="6OE9"/>
<dbReference type="SASBDB" id="P0DOV2"/>
<dbReference type="SMR" id="P0DOV2"/>
<dbReference type="FunCoup" id="P0DOV2">
    <property type="interactions" value="218"/>
</dbReference>
<dbReference type="STRING" id="10090.ENSMUSP00000106845"/>
<dbReference type="GlyGen" id="P0DOV2">
    <property type="glycosylation" value="1 site, 1 O-linked glycan (1 site)"/>
</dbReference>
<dbReference type="iPTMnet" id="P0DOV2"/>
<dbReference type="PhosphoSitePlus" id="P0DOV2"/>
<dbReference type="SwissPalm" id="P0DOV2"/>
<dbReference type="jPOST" id="P0DOV2"/>
<dbReference type="PaxDb" id="10090-ENSMUSP00000106845"/>
<dbReference type="ProteomicsDB" id="267106"/>
<dbReference type="Pumba" id="P0DOV2"/>
<dbReference type="DNASU" id="15951"/>
<dbReference type="Ensembl" id="ENSMUST00000111214.4">
    <property type="protein sequence ID" value="ENSMUSP00000106845.3"/>
    <property type="gene ID" value="ENSMUSG00000073489.7"/>
</dbReference>
<dbReference type="GeneID" id="15951"/>
<dbReference type="KEGG" id="mmu:15951"/>
<dbReference type="AGR" id="MGI:96429"/>
<dbReference type="CTD" id="15951"/>
<dbReference type="MGI" id="MGI:96429">
    <property type="gene designation" value="Ifi204"/>
</dbReference>
<dbReference type="VEuPathDB" id="HostDB:ENSMUSG00000073489"/>
<dbReference type="eggNOG" id="ENOG502QTQS">
    <property type="taxonomic scope" value="Eukaryota"/>
</dbReference>
<dbReference type="GeneTree" id="ENSGT00390000013296"/>
<dbReference type="InParanoid" id="P0DOV2"/>
<dbReference type="OMA" id="YNINCKE"/>
<dbReference type="OrthoDB" id="9622064at2759"/>
<dbReference type="PhylomeDB" id="P0DOV2"/>
<dbReference type="Reactome" id="R-MMU-6798695">
    <property type="pathway name" value="Neutrophil degranulation"/>
</dbReference>
<dbReference type="BioGRID-ORCS" id="15951">
    <property type="hits" value="4 hits in 76 CRISPR screens"/>
</dbReference>
<dbReference type="ChiTaRS" id="Ifi204">
    <property type="organism name" value="mouse"/>
</dbReference>
<dbReference type="PRO" id="PR:P0DOV2"/>
<dbReference type="Proteomes" id="UP000000589">
    <property type="component" value="Chromosome 1"/>
</dbReference>
<dbReference type="RNAct" id="P0DOV2">
    <property type="molecule type" value="protein"/>
</dbReference>
<dbReference type="Bgee" id="ENSMUSG00000073489">
    <property type="expression patterns" value="Expressed in granulocyte and 114 other cell types or tissues"/>
</dbReference>
<dbReference type="GO" id="GO:0005737">
    <property type="term" value="C:cytoplasm"/>
    <property type="evidence" value="ECO:0007669"/>
    <property type="project" value="UniProtKB-SubCell"/>
</dbReference>
<dbReference type="GO" id="GO:0042405">
    <property type="term" value="C:nuclear inclusion body"/>
    <property type="evidence" value="ECO:0000314"/>
    <property type="project" value="UniProtKB"/>
</dbReference>
<dbReference type="GO" id="GO:0016607">
    <property type="term" value="C:nuclear speck"/>
    <property type="evidence" value="ECO:0000266"/>
    <property type="project" value="MGI"/>
</dbReference>
<dbReference type="GO" id="GO:0005730">
    <property type="term" value="C:nucleolus"/>
    <property type="evidence" value="ECO:0000314"/>
    <property type="project" value="UniProtKB"/>
</dbReference>
<dbReference type="GO" id="GO:0005654">
    <property type="term" value="C:nucleoplasm"/>
    <property type="evidence" value="ECO:0000266"/>
    <property type="project" value="MGI"/>
</dbReference>
<dbReference type="GO" id="GO:0005634">
    <property type="term" value="C:nucleus"/>
    <property type="evidence" value="ECO:0000266"/>
    <property type="project" value="MGI"/>
</dbReference>
<dbReference type="GO" id="GO:0003690">
    <property type="term" value="F:double-stranded DNA binding"/>
    <property type="evidence" value="ECO:0000314"/>
    <property type="project" value="MGI"/>
</dbReference>
<dbReference type="GO" id="GO:0003712">
    <property type="term" value="F:transcription coregulator activity"/>
    <property type="evidence" value="ECO:0000316"/>
    <property type="project" value="MGI"/>
</dbReference>
<dbReference type="GO" id="GO:0002218">
    <property type="term" value="P:activation of innate immune response"/>
    <property type="evidence" value="ECO:0007669"/>
    <property type="project" value="InterPro"/>
</dbReference>
<dbReference type="GO" id="GO:0035457">
    <property type="term" value="P:cellular response to interferon-alpha"/>
    <property type="evidence" value="ECO:0000314"/>
    <property type="project" value="UniProtKB"/>
</dbReference>
<dbReference type="GO" id="GO:0035458">
    <property type="term" value="P:cellular response to interferon-beta"/>
    <property type="evidence" value="ECO:0000314"/>
    <property type="project" value="MGI"/>
</dbReference>
<dbReference type="GO" id="GO:0045087">
    <property type="term" value="P:innate immune response"/>
    <property type="evidence" value="ECO:0007669"/>
    <property type="project" value="UniProtKB-KW"/>
</dbReference>
<dbReference type="GO" id="GO:0048839">
    <property type="term" value="P:inner ear development"/>
    <property type="evidence" value="ECO:0000314"/>
    <property type="project" value="MGI"/>
</dbReference>
<dbReference type="GO" id="GO:0042771">
    <property type="term" value="P:intrinsic apoptotic signaling pathway in response to DNA damage by p53 class mediator"/>
    <property type="evidence" value="ECO:0000266"/>
    <property type="project" value="MGI"/>
</dbReference>
<dbReference type="GO" id="GO:0045669">
    <property type="term" value="P:positive regulation of osteoblast differentiation"/>
    <property type="evidence" value="ECO:0000316"/>
    <property type="project" value="MGI"/>
</dbReference>
<dbReference type="GO" id="GO:0006357">
    <property type="term" value="P:regulation of transcription by RNA polymerase II"/>
    <property type="evidence" value="ECO:0000314"/>
    <property type="project" value="MGI"/>
</dbReference>
<dbReference type="GO" id="GO:0009617">
    <property type="term" value="P:response to bacterium"/>
    <property type="evidence" value="ECO:0000270"/>
    <property type="project" value="MGI"/>
</dbReference>
<dbReference type="CDD" id="cd08305">
    <property type="entry name" value="Pyrin"/>
    <property type="match status" value="1"/>
</dbReference>
<dbReference type="FunFam" id="2.40.50.140:FF:000500">
    <property type="entry name" value="Interferon-activable protein 202"/>
    <property type="match status" value="1"/>
</dbReference>
<dbReference type="FunFam" id="1.10.533.10:FF:000011">
    <property type="entry name" value="Myeloid cell nuclear differentiation antigen"/>
    <property type="match status" value="1"/>
</dbReference>
<dbReference type="FunFam" id="2.40.50.140:FF:000101">
    <property type="entry name" value="Myeloid cell nuclear differentiation antigen"/>
    <property type="match status" value="2"/>
</dbReference>
<dbReference type="FunFam" id="2.40.50.140:FF:000105">
    <property type="entry name" value="Myeloid cell nuclear differentiation antigen"/>
    <property type="match status" value="1"/>
</dbReference>
<dbReference type="Gene3D" id="1.10.533.10">
    <property type="entry name" value="Death Domain, Fas"/>
    <property type="match status" value="1"/>
</dbReference>
<dbReference type="Gene3D" id="2.40.50.140">
    <property type="entry name" value="Nucleic acid-binding proteins"/>
    <property type="match status" value="4"/>
</dbReference>
<dbReference type="InterPro" id="IPR004020">
    <property type="entry name" value="DAPIN"/>
</dbReference>
<dbReference type="InterPro" id="IPR011029">
    <property type="entry name" value="DEATH-like_dom_sf"/>
</dbReference>
<dbReference type="InterPro" id="IPR040205">
    <property type="entry name" value="HIN-200"/>
</dbReference>
<dbReference type="InterPro" id="IPR004021">
    <property type="entry name" value="HIN200/IF120x"/>
</dbReference>
<dbReference type="InterPro" id="IPR012340">
    <property type="entry name" value="NA-bd_OB-fold"/>
</dbReference>
<dbReference type="PANTHER" id="PTHR12200">
    <property type="entry name" value="INTERFERON-INDUCIBLE PROTEIN AIM2 FAMILY MEMBER"/>
    <property type="match status" value="1"/>
</dbReference>
<dbReference type="PANTHER" id="PTHR12200:SF25">
    <property type="entry name" value="PYRIN AND HIN DOMAIN-CONTAINING PROTEIN 1"/>
    <property type="match status" value="1"/>
</dbReference>
<dbReference type="Pfam" id="PF02760">
    <property type="entry name" value="HIN"/>
    <property type="match status" value="2"/>
</dbReference>
<dbReference type="Pfam" id="PF02758">
    <property type="entry name" value="PYRIN"/>
    <property type="match status" value="1"/>
</dbReference>
<dbReference type="SMART" id="SM01289">
    <property type="entry name" value="PYRIN"/>
    <property type="match status" value="1"/>
</dbReference>
<dbReference type="SUPFAM" id="SSF159141">
    <property type="entry name" value="HIN-2000 domain-like"/>
    <property type="match status" value="4"/>
</dbReference>
<dbReference type="PROSITE" id="PS50824">
    <property type="entry name" value="DAPIN"/>
    <property type="match status" value="1"/>
</dbReference>
<dbReference type="PROSITE" id="PS50834">
    <property type="entry name" value="HIN_200"/>
    <property type="match status" value="2"/>
</dbReference>
<feature type="chain" id="PRO_0000153721" description="Interferon-activable protein 204">
    <location>
        <begin position="1"/>
        <end position="619"/>
    </location>
</feature>
<feature type="domain" description="Pyrin" evidence="2">
    <location>
        <begin position="1"/>
        <end position="88"/>
    </location>
</feature>
<feature type="repeat" description="1">
    <location>
        <begin position="134"/>
        <end position="140"/>
    </location>
</feature>
<feature type="repeat" description="2">
    <location>
        <begin position="141"/>
        <end position="147"/>
    </location>
</feature>
<feature type="repeat" description="3">
    <location>
        <begin position="148"/>
        <end position="154"/>
    </location>
</feature>
<feature type="domain" description="HIN-200 1" evidence="3">
    <location>
        <begin position="213"/>
        <end position="413"/>
    </location>
</feature>
<feature type="domain" description="HIN-200 2" evidence="3">
    <location>
        <begin position="417"/>
        <end position="615"/>
    </location>
</feature>
<feature type="region of interest" description="Disordered" evidence="4">
    <location>
        <begin position="86"/>
        <end position="223"/>
    </location>
</feature>
<feature type="region of interest" description="3 X 7 AA tandem repeats of A-[GR]-T-S-T-A-Q">
    <location>
        <begin position="134"/>
        <end position="154"/>
    </location>
</feature>
<feature type="region of interest" description="Interaction with ID2" evidence="6">
    <location>
        <begin position="550"/>
        <end position="614"/>
    </location>
</feature>
<feature type="short sequence motif" description="Nuclear export signal">
    <location>
        <begin position="24"/>
        <end position="35"/>
    </location>
</feature>
<feature type="short sequence motif" description="Nuclear localization signal" evidence="1">
    <location>
        <begin position="150"/>
        <end position="157"/>
    </location>
</feature>
<feature type="compositionally biased region" description="Basic and acidic residues" evidence="4">
    <location>
        <begin position="86"/>
        <end position="99"/>
    </location>
</feature>
<feature type="compositionally biased region" description="Low complexity" evidence="4">
    <location>
        <begin position="122"/>
        <end position="153"/>
    </location>
</feature>
<feature type="compositionally biased region" description="Basic and acidic residues" evidence="4">
    <location>
        <begin position="159"/>
        <end position="176"/>
    </location>
</feature>
<feature type="compositionally biased region" description="Low complexity" evidence="4">
    <location>
        <begin position="190"/>
        <end position="206"/>
    </location>
</feature>
<feature type="compositionally biased region" description="Polar residues" evidence="4">
    <location>
        <begin position="207"/>
        <end position="218"/>
    </location>
</feature>
<feature type="sequence conflict" description="In Ref. 1; AAA39313, 2; CAJ18559 and 3; AAH10546." evidence="16" ref="1 2 3">
    <original>A</original>
    <variation>E</variation>
    <location>
        <position position="67"/>
    </location>
</feature>
<feature type="sequence conflict" description="In Ref. 1; AAA39313." evidence="16" ref="1">
    <original>A</original>
    <variation>ARTSTAQARTSTAQARTSTAQA</variation>
    <location>
        <position position="148"/>
    </location>
</feature>
<feature type="sequence conflict" description="In Ref. 2; CAJ18559 and 3; AAH10546." evidence="16" ref="2 3">
    <original>A</original>
    <variation>ARTSTAQE</variation>
    <location>
        <position position="148"/>
    </location>
</feature>
<feature type="sequence conflict" description="In Ref. 1; AAA39313, 2; CAJ18559 and 3; AAH10546." evidence="16" ref="1 2 3">
    <original>I</original>
    <variation>S</variation>
    <location>
        <position position="158"/>
    </location>
</feature>
<feature type="sequence conflict" description="In Ref. 1; AAA39313, 2; CAJ18559 and 3; AAH10546." evidence="16" ref="1 2 3">
    <original>R</original>
    <variation>M</variation>
    <location>
        <position position="187"/>
    </location>
</feature>
<feature type="sequence conflict" description="In Ref. 1; AAA39313." evidence="16" ref="1">
    <original>T</original>
    <variation>R</variation>
    <location>
        <position position="513"/>
    </location>
</feature>
<feature type="strand" evidence="22">
    <location>
        <begin position="216"/>
        <end position="218"/>
    </location>
</feature>
<feature type="strand" evidence="20">
    <location>
        <begin position="223"/>
        <end position="225"/>
    </location>
</feature>
<feature type="strand" evidence="20">
    <location>
        <begin position="229"/>
        <end position="236"/>
    </location>
</feature>
<feature type="strand" evidence="20">
    <location>
        <begin position="240"/>
        <end position="243"/>
    </location>
</feature>
<feature type="strand" evidence="20">
    <location>
        <begin position="249"/>
        <end position="258"/>
    </location>
</feature>
<feature type="strand" evidence="20">
    <location>
        <begin position="263"/>
        <end position="268"/>
    </location>
</feature>
<feature type="helix" evidence="20">
    <location>
        <begin position="271"/>
        <end position="273"/>
    </location>
</feature>
<feature type="turn" evidence="20">
    <location>
        <begin position="274"/>
        <end position="276"/>
    </location>
</feature>
<feature type="strand" evidence="20">
    <location>
        <begin position="282"/>
        <end position="291"/>
    </location>
</feature>
<feature type="strand" evidence="20">
    <location>
        <begin position="294"/>
        <end position="297"/>
    </location>
</feature>
<feature type="strand" evidence="20">
    <location>
        <begin position="301"/>
        <end position="305"/>
    </location>
</feature>
<feature type="helix" evidence="20">
    <location>
        <begin position="308"/>
        <end position="310"/>
    </location>
</feature>
<feature type="helix" evidence="20">
    <location>
        <begin position="316"/>
        <end position="323"/>
    </location>
</feature>
<feature type="helix" evidence="20">
    <location>
        <begin position="328"/>
        <end position="331"/>
    </location>
</feature>
<feature type="strand" evidence="20">
    <location>
        <begin position="339"/>
        <end position="351"/>
    </location>
</feature>
<feature type="strand" evidence="20">
    <location>
        <begin position="356"/>
        <end position="362"/>
    </location>
</feature>
<feature type="strand" evidence="20">
    <location>
        <begin position="365"/>
        <end position="371"/>
    </location>
</feature>
<feature type="helix" evidence="20">
    <location>
        <begin position="373"/>
        <end position="375"/>
    </location>
</feature>
<feature type="strand" evidence="20">
    <location>
        <begin position="385"/>
        <end position="395"/>
    </location>
</feature>
<feature type="strand" evidence="20">
    <location>
        <begin position="397"/>
        <end position="403"/>
    </location>
</feature>
<feature type="strand" evidence="20">
    <location>
        <begin position="409"/>
        <end position="413"/>
    </location>
</feature>
<feature type="strand" evidence="21">
    <location>
        <begin position="433"/>
        <end position="440"/>
    </location>
</feature>
<feature type="strand" evidence="21">
    <location>
        <begin position="444"/>
        <end position="447"/>
    </location>
</feature>
<feature type="turn" evidence="21">
    <location>
        <begin position="448"/>
        <end position="451"/>
    </location>
</feature>
<feature type="strand" evidence="21">
    <location>
        <begin position="452"/>
        <end position="460"/>
    </location>
</feature>
<feature type="strand" evidence="21">
    <location>
        <begin position="465"/>
        <end position="471"/>
    </location>
</feature>
<feature type="helix" evidence="21">
    <location>
        <begin position="473"/>
        <end position="477"/>
    </location>
</feature>
<feature type="strand" evidence="21">
    <location>
        <begin position="484"/>
        <end position="487"/>
    </location>
</feature>
<feature type="strand" evidence="21">
    <location>
        <begin position="489"/>
        <end position="493"/>
    </location>
</feature>
<feature type="strand" evidence="21">
    <location>
        <begin position="496"/>
        <end position="499"/>
    </location>
</feature>
<feature type="helix" evidence="21">
    <location>
        <begin position="502"/>
        <end position="504"/>
    </location>
</feature>
<feature type="strand" evidence="21">
    <location>
        <begin position="508"/>
        <end position="510"/>
    </location>
</feature>
<feature type="helix" evidence="21">
    <location>
        <begin position="518"/>
        <end position="525"/>
    </location>
</feature>
<feature type="helix" evidence="21">
    <location>
        <begin position="530"/>
        <end position="534"/>
    </location>
</feature>
<feature type="strand" evidence="21">
    <location>
        <begin position="541"/>
        <end position="554"/>
    </location>
</feature>
<feature type="strand" evidence="21">
    <location>
        <begin position="557"/>
        <end position="564"/>
    </location>
</feature>
<feature type="strand" evidence="21">
    <location>
        <begin position="567"/>
        <end position="573"/>
    </location>
</feature>
<feature type="helix" evidence="21">
    <location>
        <begin position="575"/>
        <end position="579"/>
    </location>
</feature>
<feature type="strand" evidence="21">
    <location>
        <begin position="587"/>
        <end position="597"/>
    </location>
</feature>
<feature type="strand" evidence="21">
    <location>
        <begin position="602"/>
        <end position="605"/>
    </location>
</feature>
<feature type="strand" evidence="21">
    <location>
        <begin position="611"/>
        <end position="614"/>
    </location>
</feature>